<proteinExistence type="inferred from homology"/>
<name>COX2_SYMST</name>
<reference key="1">
    <citation type="journal article" date="1992" name="Mol. Phylogenet. Evol.">
        <title>Evolution of the mitochondrial cytochrome oxidase II gene among 10 orders of insects.</title>
        <authorList>
            <person name="Liu H."/>
            <person name="Beckenbach A.T."/>
        </authorList>
    </citation>
    <scope>NUCLEOTIDE SEQUENCE [GENOMIC DNA]</scope>
</reference>
<keyword id="KW-0186">Copper</keyword>
<keyword id="KW-0249">Electron transport</keyword>
<keyword id="KW-0460">Magnesium</keyword>
<keyword id="KW-0472">Membrane</keyword>
<keyword id="KW-0479">Metal-binding</keyword>
<keyword id="KW-0496">Mitochondrion</keyword>
<keyword id="KW-0999">Mitochondrion inner membrane</keyword>
<keyword id="KW-0679">Respiratory chain</keyword>
<keyword id="KW-1278">Translocase</keyword>
<keyword id="KW-0812">Transmembrane</keyword>
<keyword id="KW-1133">Transmembrane helix</keyword>
<keyword id="KW-0813">Transport</keyword>
<organism>
    <name type="scientific">Sympetrum striolatum</name>
    <name type="common">Common darter dragonfly</name>
    <name type="synonym">Libellula striolata</name>
    <dbReference type="NCBI Taxonomy" id="6969"/>
    <lineage>
        <taxon>Eukaryota</taxon>
        <taxon>Metazoa</taxon>
        <taxon>Ecdysozoa</taxon>
        <taxon>Arthropoda</taxon>
        <taxon>Hexapoda</taxon>
        <taxon>Insecta</taxon>
        <taxon>Pterygota</taxon>
        <taxon>Palaeoptera</taxon>
        <taxon>Odonata</taxon>
        <taxon>Epiprocta</taxon>
        <taxon>Anisoptera</taxon>
        <taxon>Libellulidae</taxon>
        <taxon>Sympetrum</taxon>
    </lineage>
</organism>
<evidence type="ECO:0000250" key="1">
    <source>
        <dbReference type="UniProtKB" id="P00410"/>
    </source>
</evidence>
<evidence type="ECO:0000255" key="2"/>
<evidence type="ECO:0000305" key="3"/>
<feature type="chain" id="PRO_0000183698" description="Cytochrome c oxidase subunit 2">
    <location>
        <begin position="1"/>
        <end position="229"/>
    </location>
</feature>
<feature type="topological domain" description="Mitochondrial intermembrane" evidence="2">
    <location>
        <begin position="1"/>
        <end position="26"/>
    </location>
</feature>
<feature type="transmembrane region" description="Helical" evidence="2">
    <location>
        <begin position="27"/>
        <end position="48"/>
    </location>
</feature>
<feature type="topological domain" description="Mitochondrial matrix" evidence="2">
    <location>
        <begin position="49"/>
        <end position="62"/>
    </location>
</feature>
<feature type="transmembrane region" description="Helical" evidence="2">
    <location>
        <begin position="63"/>
        <end position="82"/>
    </location>
</feature>
<feature type="topological domain" description="Mitochondrial intermembrane" evidence="2">
    <location>
        <begin position="83"/>
        <end position="229"/>
    </location>
</feature>
<feature type="binding site" evidence="1">
    <location>
        <position position="161"/>
    </location>
    <ligand>
        <name>Cu cation</name>
        <dbReference type="ChEBI" id="CHEBI:23378"/>
        <label>A1</label>
    </ligand>
</feature>
<feature type="binding site" evidence="1">
    <location>
        <position position="196"/>
    </location>
    <ligand>
        <name>Cu cation</name>
        <dbReference type="ChEBI" id="CHEBI:23378"/>
        <label>A1</label>
    </ligand>
</feature>
<feature type="binding site" evidence="1">
    <location>
        <position position="196"/>
    </location>
    <ligand>
        <name>Cu cation</name>
        <dbReference type="ChEBI" id="CHEBI:23378"/>
        <label>A2</label>
    </ligand>
</feature>
<feature type="binding site" evidence="1">
    <location>
        <position position="198"/>
    </location>
    <ligand>
        <name>Cu cation</name>
        <dbReference type="ChEBI" id="CHEBI:23378"/>
        <label>A2</label>
    </ligand>
</feature>
<feature type="binding site" evidence="1">
    <location>
        <position position="198"/>
    </location>
    <ligand>
        <name>Mg(2+)</name>
        <dbReference type="ChEBI" id="CHEBI:18420"/>
        <note>ligand shared with subunit 1</note>
    </ligand>
</feature>
<feature type="binding site" evidence="1">
    <location>
        <position position="200"/>
    </location>
    <ligand>
        <name>Cu cation</name>
        <dbReference type="ChEBI" id="CHEBI:23378"/>
        <label>A1</label>
    </ligand>
</feature>
<feature type="binding site" evidence="1">
    <location>
        <position position="200"/>
    </location>
    <ligand>
        <name>Cu cation</name>
        <dbReference type="ChEBI" id="CHEBI:23378"/>
        <label>A2</label>
    </ligand>
</feature>
<feature type="binding site" evidence="1">
    <location>
        <position position="204"/>
    </location>
    <ligand>
        <name>Cu cation</name>
        <dbReference type="ChEBI" id="CHEBI:23378"/>
        <label>A2</label>
    </ligand>
</feature>
<feature type="binding site" evidence="1">
    <location>
        <position position="207"/>
    </location>
    <ligand>
        <name>Cu cation</name>
        <dbReference type="ChEBI" id="CHEBI:23378"/>
        <label>A1</label>
    </ligand>
</feature>
<protein>
    <recommendedName>
        <fullName>Cytochrome c oxidase subunit 2</fullName>
        <ecNumber>7.1.1.9</ecNumber>
    </recommendedName>
    <alternativeName>
        <fullName>Cytochrome c oxidase polypeptide II</fullName>
    </alternativeName>
</protein>
<sequence length="229" mass="26565">MATWAQLNFQDAASPMMEQLHYFHDHTMMVLVIITIMVAYIMGTMFFNKDVNRYLLDGQKIETEWTIVPVFVLVIIAMPSLRLLYLLDEVNEPSITLKTIGHQWYWSYEYSDFKHIEFDSYMIPYNEMEESGLRLLEVDNRTTLPMQTQVRILITAADVLHSWTVPSLGIKVDATPGRLNQTSFFINRPGIFFGQCSEICGANHSFMPIMIESVNIKSFINWIQNMSEA</sequence>
<geneLocation type="mitochondrion"/>
<comment type="function">
    <text evidence="1">Component of the cytochrome c oxidase, the last enzyme in the mitochondrial electron transport chain which drives oxidative phosphorylation. The respiratory chain contains 3 multisubunit complexes succinate dehydrogenase (complex II, CII), ubiquinol-cytochrome c oxidoreductase (cytochrome b-c1 complex, complex III, CIII) and cytochrome c oxidase (complex IV, CIV), that cooperate to transfer electrons derived from NADH and succinate to molecular oxygen, creating an electrochemical gradient over the inner membrane that drives transmembrane transport and the ATP synthase. Cytochrome c oxidase is the component of the respiratory chain that catalyzes the reduction of oxygen to water. Electrons originating from reduced cytochrome c in the intermembrane space (IMS) are transferred via the dinuclear copper A center (CU(A)) of subunit 2 and heme A of subunit 1 to the active site in subunit 1, a binuclear center (BNC) formed by heme A3 and copper B (CU(B)). The BNC reduces molecular oxygen to 2 water molecules using 4 electrons from cytochrome c in the IMS and 4 protons from the mitochondrial matrix.</text>
</comment>
<comment type="catalytic activity">
    <reaction evidence="1">
        <text>4 Fe(II)-[cytochrome c] + O2 + 8 H(+)(in) = 4 Fe(III)-[cytochrome c] + 2 H2O + 4 H(+)(out)</text>
        <dbReference type="Rhea" id="RHEA:11436"/>
        <dbReference type="Rhea" id="RHEA-COMP:10350"/>
        <dbReference type="Rhea" id="RHEA-COMP:14399"/>
        <dbReference type="ChEBI" id="CHEBI:15377"/>
        <dbReference type="ChEBI" id="CHEBI:15378"/>
        <dbReference type="ChEBI" id="CHEBI:15379"/>
        <dbReference type="ChEBI" id="CHEBI:29033"/>
        <dbReference type="ChEBI" id="CHEBI:29034"/>
        <dbReference type="EC" id="7.1.1.9"/>
    </reaction>
    <physiologicalReaction direction="left-to-right" evidence="1">
        <dbReference type="Rhea" id="RHEA:11437"/>
    </physiologicalReaction>
</comment>
<comment type="cofactor">
    <cofactor evidence="1">
        <name>Cu cation</name>
        <dbReference type="ChEBI" id="CHEBI:23378"/>
    </cofactor>
    <text evidence="1">Binds a dinuclear copper A center per subunit.</text>
</comment>
<comment type="subunit">
    <text evidence="1">Component of the cytochrome c oxidase (complex IV, CIV), a multisubunit enzyme composed of a catalytic core of 3 subunits and several supernumerary subunits. The complex exists as a monomer or a dimer and forms supercomplexes (SCs) in the inner mitochondrial membrane with ubiquinol-cytochrome c oxidoreductase (cytochrome b-c1 complex, complex III, CIII).</text>
</comment>
<comment type="subcellular location">
    <subcellularLocation>
        <location evidence="1">Mitochondrion inner membrane</location>
        <topology evidence="1">Multi-pass membrane protein</topology>
    </subcellularLocation>
</comment>
<comment type="similarity">
    <text evidence="3">Belongs to the cytochrome c oxidase subunit 2 family.</text>
</comment>
<gene>
    <name type="primary">COII</name>
</gene>
<dbReference type="EC" id="7.1.1.9"/>
<dbReference type="EMBL" id="M83962">
    <property type="protein sequence ID" value="AAA32087.1"/>
    <property type="molecule type" value="Genomic_DNA"/>
</dbReference>
<dbReference type="PIR" id="D38941">
    <property type="entry name" value="D38941"/>
</dbReference>
<dbReference type="SMR" id="P29880"/>
<dbReference type="GO" id="GO:0005743">
    <property type="term" value="C:mitochondrial inner membrane"/>
    <property type="evidence" value="ECO:0007669"/>
    <property type="project" value="UniProtKB-SubCell"/>
</dbReference>
<dbReference type="GO" id="GO:0005507">
    <property type="term" value="F:copper ion binding"/>
    <property type="evidence" value="ECO:0007669"/>
    <property type="project" value="InterPro"/>
</dbReference>
<dbReference type="GO" id="GO:0004129">
    <property type="term" value="F:cytochrome-c oxidase activity"/>
    <property type="evidence" value="ECO:0007669"/>
    <property type="project" value="UniProtKB-EC"/>
</dbReference>
<dbReference type="GO" id="GO:0042773">
    <property type="term" value="P:ATP synthesis coupled electron transport"/>
    <property type="evidence" value="ECO:0007669"/>
    <property type="project" value="TreeGrafter"/>
</dbReference>
<dbReference type="CDD" id="cd13912">
    <property type="entry name" value="CcO_II_C"/>
    <property type="match status" value="1"/>
</dbReference>
<dbReference type="FunFam" id="1.10.287.90:FF:000001">
    <property type="entry name" value="Cytochrome c oxidase subunit 2"/>
    <property type="match status" value="1"/>
</dbReference>
<dbReference type="FunFam" id="2.60.40.420:FF:000001">
    <property type="entry name" value="Cytochrome c oxidase subunit 2"/>
    <property type="match status" value="1"/>
</dbReference>
<dbReference type="Gene3D" id="1.10.287.90">
    <property type="match status" value="1"/>
</dbReference>
<dbReference type="Gene3D" id="2.60.40.420">
    <property type="entry name" value="Cupredoxins - blue copper proteins"/>
    <property type="match status" value="1"/>
</dbReference>
<dbReference type="InterPro" id="IPR045187">
    <property type="entry name" value="CcO_II"/>
</dbReference>
<dbReference type="InterPro" id="IPR002429">
    <property type="entry name" value="CcO_II-like_C"/>
</dbReference>
<dbReference type="InterPro" id="IPR034210">
    <property type="entry name" value="CcO_II_C"/>
</dbReference>
<dbReference type="InterPro" id="IPR001505">
    <property type="entry name" value="Copper_CuA"/>
</dbReference>
<dbReference type="InterPro" id="IPR008972">
    <property type="entry name" value="Cupredoxin"/>
</dbReference>
<dbReference type="InterPro" id="IPR014222">
    <property type="entry name" value="Cyt_c_oxidase_su2"/>
</dbReference>
<dbReference type="InterPro" id="IPR011759">
    <property type="entry name" value="Cyt_c_oxidase_su2_TM_dom"/>
</dbReference>
<dbReference type="InterPro" id="IPR036257">
    <property type="entry name" value="Cyt_c_oxidase_su2_TM_sf"/>
</dbReference>
<dbReference type="NCBIfam" id="TIGR02866">
    <property type="entry name" value="CoxB"/>
    <property type="match status" value="1"/>
</dbReference>
<dbReference type="PANTHER" id="PTHR22888:SF9">
    <property type="entry name" value="CYTOCHROME C OXIDASE SUBUNIT 2"/>
    <property type="match status" value="1"/>
</dbReference>
<dbReference type="PANTHER" id="PTHR22888">
    <property type="entry name" value="CYTOCHROME C OXIDASE, SUBUNIT II"/>
    <property type="match status" value="1"/>
</dbReference>
<dbReference type="Pfam" id="PF00116">
    <property type="entry name" value="COX2"/>
    <property type="match status" value="1"/>
</dbReference>
<dbReference type="Pfam" id="PF02790">
    <property type="entry name" value="COX2_TM"/>
    <property type="match status" value="1"/>
</dbReference>
<dbReference type="PRINTS" id="PR01166">
    <property type="entry name" value="CYCOXIDASEII"/>
</dbReference>
<dbReference type="SUPFAM" id="SSF49503">
    <property type="entry name" value="Cupredoxins"/>
    <property type="match status" value="1"/>
</dbReference>
<dbReference type="SUPFAM" id="SSF81464">
    <property type="entry name" value="Cytochrome c oxidase subunit II-like, transmembrane region"/>
    <property type="match status" value="1"/>
</dbReference>
<dbReference type="PROSITE" id="PS00078">
    <property type="entry name" value="COX2"/>
    <property type="match status" value="1"/>
</dbReference>
<dbReference type="PROSITE" id="PS50857">
    <property type="entry name" value="COX2_CUA"/>
    <property type="match status" value="1"/>
</dbReference>
<dbReference type="PROSITE" id="PS50999">
    <property type="entry name" value="COX2_TM"/>
    <property type="match status" value="1"/>
</dbReference>
<accession>P29880</accession>